<feature type="chain" id="PRO_0000427623" description="Uncharacterized protein MT0980">
    <location>
        <begin position="1"/>
        <end position="282"/>
    </location>
</feature>
<organism>
    <name type="scientific">Mycobacterium tuberculosis (strain CDC 1551 / Oshkosh)</name>
    <dbReference type="NCBI Taxonomy" id="83331"/>
    <lineage>
        <taxon>Bacteria</taxon>
        <taxon>Bacillati</taxon>
        <taxon>Actinomycetota</taxon>
        <taxon>Actinomycetes</taxon>
        <taxon>Mycobacteriales</taxon>
        <taxon>Mycobacteriaceae</taxon>
        <taxon>Mycobacterium</taxon>
        <taxon>Mycobacterium tuberculosis complex</taxon>
    </lineage>
</organism>
<gene>
    <name type="ordered locus">MT0980</name>
</gene>
<keyword id="KW-1185">Reference proteome</keyword>
<dbReference type="EMBL" id="AE000516">
    <property type="protein sequence ID" value="AAK45228.1"/>
    <property type="status" value="ALT_TERM"/>
    <property type="molecule type" value="Genomic_DNA"/>
</dbReference>
<dbReference type="PIR" id="G70716">
    <property type="entry name" value="G70716"/>
</dbReference>
<dbReference type="RefSeq" id="WP_003404873.1">
    <property type="nucleotide sequence ID" value="NZ_KK341227.1"/>
</dbReference>
<dbReference type="SMR" id="P9WKN4"/>
<dbReference type="KEGG" id="mtc:MT0980"/>
<dbReference type="PATRIC" id="fig|83331.31.peg.1051"/>
<dbReference type="HOGENOM" id="CLU_027853_7_0_11"/>
<dbReference type="Proteomes" id="UP000001020">
    <property type="component" value="Chromosome"/>
</dbReference>
<dbReference type="GO" id="GO:0016705">
    <property type="term" value="F:oxidoreductase activity, acting on paired donors, with incorporation or reduction of molecular oxygen"/>
    <property type="evidence" value="ECO:0007669"/>
    <property type="project" value="InterPro"/>
</dbReference>
<dbReference type="Gene3D" id="3.20.20.30">
    <property type="entry name" value="Luciferase-like domain"/>
    <property type="match status" value="1"/>
</dbReference>
<dbReference type="InterPro" id="IPR051260">
    <property type="entry name" value="Diverse_substr_monoxygenases"/>
</dbReference>
<dbReference type="InterPro" id="IPR019921">
    <property type="entry name" value="Lucif-like_OxRdtase_Rv2161c"/>
</dbReference>
<dbReference type="InterPro" id="IPR011251">
    <property type="entry name" value="Luciferase-like_dom"/>
</dbReference>
<dbReference type="InterPro" id="IPR036661">
    <property type="entry name" value="Luciferase-like_sf"/>
</dbReference>
<dbReference type="NCBIfam" id="TIGR03619">
    <property type="entry name" value="F420_Rv2161c"/>
    <property type="match status" value="1"/>
</dbReference>
<dbReference type="PANTHER" id="PTHR30011">
    <property type="entry name" value="ALKANESULFONATE MONOOXYGENASE-RELATED"/>
    <property type="match status" value="1"/>
</dbReference>
<dbReference type="PANTHER" id="PTHR30011:SF32">
    <property type="entry name" value="CONSERVED PROTEIN"/>
    <property type="match status" value="1"/>
</dbReference>
<dbReference type="Pfam" id="PF00296">
    <property type="entry name" value="Bac_luciferase"/>
    <property type="match status" value="1"/>
</dbReference>
<dbReference type="SUPFAM" id="SSF51679">
    <property type="entry name" value="Bacterial luciferase-like"/>
    <property type="match status" value="1"/>
</dbReference>
<proteinExistence type="predicted"/>
<accession>P9WKN4</accession>
<accession>L0T5E2</accession>
<accession>P64769</accession>
<accession>P71557</accession>
<evidence type="ECO:0000305" key="1"/>
<protein>
    <recommendedName>
        <fullName>Uncharacterized protein MT0980</fullName>
    </recommendedName>
</protein>
<comment type="similarity">
    <text evidence="1">To M.tuberculosis Rv2161c and Rv3079c.</text>
</comment>
<name>Y953_MYCTO</name>
<sequence length="282" mass="30913">MHYGLVLFTSDRGITPAAAARLAESHGFRTFYVPEHTHIPVKRQAAHPTTGDASLPDDRYMRTLDPWVSLGAASAVTSRIRLATAVALPVEHDPITLAKSIATLDHLSHGRVSVGVGFGWNTDELVDHGVPPGRRRTMLREYLEAMRALWTQEEACYDGEFVKFGPSWAWPKPVQPHIPVLVGAAGTEKNFKWIARSADGWITTPRDVDIDEPVKLLQDIWAAAGRDGLPQIVALDVKPVPDKLARWAELGVTEVLFGMPDRSADDAAAYVERLAAKLACCV</sequence>
<reference key="1">
    <citation type="journal article" date="2002" name="J. Bacteriol.">
        <title>Whole-genome comparison of Mycobacterium tuberculosis clinical and laboratory strains.</title>
        <authorList>
            <person name="Fleischmann R.D."/>
            <person name="Alland D."/>
            <person name="Eisen J.A."/>
            <person name="Carpenter L."/>
            <person name="White O."/>
            <person name="Peterson J.D."/>
            <person name="DeBoy R.T."/>
            <person name="Dodson R.J."/>
            <person name="Gwinn M.L."/>
            <person name="Haft D.H."/>
            <person name="Hickey E.K."/>
            <person name="Kolonay J.F."/>
            <person name="Nelson W.C."/>
            <person name="Umayam L.A."/>
            <person name="Ermolaeva M.D."/>
            <person name="Salzberg S.L."/>
            <person name="Delcher A."/>
            <person name="Utterback T.R."/>
            <person name="Weidman J.F."/>
            <person name="Khouri H.M."/>
            <person name="Gill J."/>
            <person name="Mikula A."/>
            <person name="Bishai W."/>
            <person name="Jacobs W.R. Jr."/>
            <person name="Venter J.C."/>
            <person name="Fraser C.M."/>
        </authorList>
    </citation>
    <scope>NUCLEOTIDE SEQUENCE [LARGE SCALE GENOMIC DNA]</scope>
    <source>
        <strain>CDC 1551 / Oshkosh</strain>
    </source>
</reference>